<reference key="1">
    <citation type="journal article" date="1995" name="DNA Res.">
        <title>Sequence analysis of the genome of the unicellular cyanobacterium Synechocystis sp. strain PCC6803. I. Sequence features in the 1 Mb region from map positions 64% to 92% of the genome.</title>
        <authorList>
            <person name="Kaneko T."/>
            <person name="Tanaka A."/>
            <person name="Sato S."/>
            <person name="Kotani H."/>
            <person name="Sazuka T."/>
            <person name="Miyajima N."/>
            <person name="Sugiura M."/>
            <person name="Tabata S."/>
        </authorList>
    </citation>
    <scope>NUCLEOTIDE SEQUENCE [LARGE SCALE GENOMIC DNA]</scope>
    <source>
        <strain>ATCC 27184 / PCC 6803 / N-1</strain>
    </source>
</reference>
<reference key="2">
    <citation type="journal article" date="1996" name="DNA Res.">
        <title>Sequence analysis of the genome of the unicellular cyanobacterium Synechocystis sp. strain PCC6803. II. Sequence determination of the entire genome and assignment of potential protein-coding regions.</title>
        <authorList>
            <person name="Kaneko T."/>
            <person name="Sato S."/>
            <person name="Kotani H."/>
            <person name="Tanaka A."/>
            <person name="Asamizu E."/>
            <person name="Nakamura Y."/>
            <person name="Miyajima N."/>
            <person name="Hirosawa M."/>
            <person name="Sugiura M."/>
            <person name="Sasamoto S."/>
            <person name="Kimura T."/>
            <person name="Hosouchi T."/>
            <person name="Matsuno A."/>
            <person name="Muraki A."/>
            <person name="Nakazaki N."/>
            <person name="Naruo K."/>
            <person name="Okumura S."/>
            <person name="Shimpo S."/>
            <person name="Takeuchi C."/>
            <person name="Wada T."/>
            <person name="Watanabe A."/>
            <person name="Yamada M."/>
            <person name="Yasuda M."/>
            <person name="Tabata S."/>
        </authorList>
    </citation>
    <scope>NUCLEOTIDE SEQUENCE [LARGE SCALE GENOMIC DNA]</scope>
    <source>
        <strain>ATCC 27184 / PCC 6803 / Kazusa</strain>
    </source>
</reference>
<protein>
    <recommendedName>
        <fullName evidence="1">Gamma-glutamyl phosphate reductase 2</fullName>
        <shortName evidence="1">GPR 2</shortName>
        <ecNumber evidence="1">1.2.1.41</ecNumber>
    </recommendedName>
    <alternativeName>
        <fullName evidence="1">Glutamate-5-semialdehyde dehydrogenase 2</fullName>
    </alternativeName>
    <alternativeName>
        <fullName evidence="1">Glutamyl-gamma-semialdehyde dehydrogenase 2</fullName>
        <shortName evidence="1">GSA dehydrogenase 2</shortName>
    </alternativeName>
</protein>
<proteinExistence type="inferred from homology"/>
<name>PROA2_SYNY3</name>
<keyword id="KW-0028">Amino-acid biosynthesis</keyword>
<keyword id="KW-0963">Cytoplasm</keyword>
<keyword id="KW-0521">NADP</keyword>
<keyword id="KW-0560">Oxidoreductase</keyword>
<keyword id="KW-0641">Proline biosynthesis</keyword>
<keyword id="KW-1185">Reference proteome</keyword>
<gene>
    <name evidence="1" type="primary">proA2</name>
    <name type="ordered locus">sll0461</name>
</gene>
<evidence type="ECO:0000255" key="1">
    <source>
        <dbReference type="HAMAP-Rule" id="MF_00412"/>
    </source>
</evidence>
<comment type="function">
    <text evidence="1">Catalyzes the NADPH-dependent reduction of L-glutamate 5-phosphate into L-glutamate 5-semialdehyde and phosphate. The product spontaneously undergoes cyclization to form 1-pyrroline-5-carboxylate.</text>
</comment>
<comment type="catalytic activity">
    <reaction evidence="1">
        <text>L-glutamate 5-semialdehyde + phosphate + NADP(+) = L-glutamyl 5-phosphate + NADPH + H(+)</text>
        <dbReference type="Rhea" id="RHEA:19541"/>
        <dbReference type="ChEBI" id="CHEBI:15378"/>
        <dbReference type="ChEBI" id="CHEBI:43474"/>
        <dbReference type="ChEBI" id="CHEBI:57783"/>
        <dbReference type="ChEBI" id="CHEBI:58066"/>
        <dbReference type="ChEBI" id="CHEBI:58274"/>
        <dbReference type="ChEBI" id="CHEBI:58349"/>
        <dbReference type="EC" id="1.2.1.41"/>
    </reaction>
</comment>
<comment type="pathway">
    <text evidence="1">Amino-acid biosynthesis; L-proline biosynthesis; L-glutamate 5-semialdehyde from L-glutamate: step 2/2.</text>
</comment>
<comment type="subcellular location">
    <subcellularLocation>
        <location evidence="1">Cytoplasm</location>
    </subcellularLocation>
</comment>
<comment type="similarity">
    <text evidence="1">Belongs to the gamma-glutamyl phosphate reductase family.</text>
</comment>
<organism>
    <name type="scientific">Synechocystis sp. (strain ATCC 27184 / PCC 6803 / Kazusa)</name>
    <dbReference type="NCBI Taxonomy" id="1111708"/>
    <lineage>
        <taxon>Bacteria</taxon>
        <taxon>Bacillati</taxon>
        <taxon>Cyanobacteriota</taxon>
        <taxon>Cyanophyceae</taxon>
        <taxon>Synechococcales</taxon>
        <taxon>Merismopediaceae</taxon>
        <taxon>Synechocystis</taxon>
    </lineage>
</organism>
<sequence>MTSDDAAAGLVRVLDAAQGAFLALDSYGGNDRSRAVLAMAEALERSFAQILEANTLDLVVSREMSVADCLCEWLKLTPERLQNTVTILKRLASLPDPLQRVMASPYQFNLAQTYCQLMPLGVVALVYESFPELAAIAAGFCLKTGNSLVLRSCGASSHSTAAICEILREGLLDADLPVDSVSHIPSETSPNVQDLVGNASQLNLVIPYGRPSFVEQISQQCTPPVLKAAMGNCYLYWSSKGDLEMVRQMIIDSHVGHPDPVNAIEKVLVSPGQNPAPLVRLLNNLQAKGFKLRGDAELCEQFPDHLTLAKENEWGKAYLDRTVAFRTTQNLKTAIAWINSHSSGHGDCIATDSYQESRQFSMGVDSALVYVNIPPYFCRNPRHGESLFLGVSSQKGQRRGLIGLEAFMTPKQIVQGESRS</sequence>
<feature type="chain" id="PRO_0000189825" description="Gamma-glutamyl phosphate reductase 2">
    <location>
        <begin position="1"/>
        <end position="420"/>
    </location>
</feature>
<accession>Q55167</accession>
<dbReference type="EC" id="1.2.1.41" evidence="1"/>
<dbReference type="EMBL" id="BA000022">
    <property type="protein sequence ID" value="BAA10306.1"/>
    <property type="molecule type" value="Genomic_DNA"/>
</dbReference>
<dbReference type="PIR" id="S74388">
    <property type="entry name" value="S74388"/>
</dbReference>
<dbReference type="SMR" id="Q55167"/>
<dbReference type="IntAct" id="Q55167">
    <property type="interactions" value="1"/>
</dbReference>
<dbReference type="STRING" id="1148.gene:10499806"/>
<dbReference type="PaxDb" id="1148-1001164"/>
<dbReference type="EnsemblBacteria" id="BAA10306">
    <property type="protein sequence ID" value="BAA10306"/>
    <property type="gene ID" value="BAA10306"/>
</dbReference>
<dbReference type="KEGG" id="syn:sll0461"/>
<dbReference type="eggNOG" id="COG0014">
    <property type="taxonomic scope" value="Bacteria"/>
</dbReference>
<dbReference type="InParanoid" id="Q55167"/>
<dbReference type="PhylomeDB" id="Q55167"/>
<dbReference type="UniPathway" id="UPA00098">
    <property type="reaction ID" value="UER00360"/>
</dbReference>
<dbReference type="Proteomes" id="UP000001425">
    <property type="component" value="Chromosome"/>
</dbReference>
<dbReference type="GO" id="GO:0005737">
    <property type="term" value="C:cytoplasm"/>
    <property type="evidence" value="ECO:0007669"/>
    <property type="project" value="UniProtKB-SubCell"/>
</dbReference>
<dbReference type="GO" id="GO:0004350">
    <property type="term" value="F:glutamate-5-semialdehyde dehydrogenase activity"/>
    <property type="evidence" value="ECO:0000318"/>
    <property type="project" value="GO_Central"/>
</dbReference>
<dbReference type="GO" id="GO:0050661">
    <property type="term" value="F:NADP binding"/>
    <property type="evidence" value="ECO:0007669"/>
    <property type="project" value="InterPro"/>
</dbReference>
<dbReference type="GO" id="GO:0055129">
    <property type="term" value="P:L-proline biosynthetic process"/>
    <property type="evidence" value="ECO:0007669"/>
    <property type="project" value="UniProtKB-UniRule"/>
</dbReference>
<dbReference type="CDD" id="cd07079">
    <property type="entry name" value="ALDH_F18-19_ProA-GPR"/>
    <property type="match status" value="1"/>
</dbReference>
<dbReference type="Gene3D" id="3.40.605.10">
    <property type="entry name" value="Aldehyde Dehydrogenase, Chain A, domain 1"/>
    <property type="match status" value="1"/>
</dbReference>
<dbReference type="Gene3D" id="3.40.309.10">
    <property type="entry name" value="Aldehyde Dehydrogenase, Chain A, domain 2"/>
    <property type="match status" value="1"/>
</dbReference>
<dbReference type="HAMAP" id="MF_00412">
    <property type="entry name" value="ProA"/>
    <property type="match status" value="1"/>
</dbReference>
<dbReference type="InterPro" id="IPR016161">
    <property type="entry name" value="Ald_DH/histidinol_DH"/>
</dbReference>
<dbReference type="InterPro" id="IPR016163">
    <property type="entry name" value="Ald_DH_C"/>
</dbReference>
<dbReference type="InterPro" id="IPR016162">
    <property type="entry name" value="Ald_DH_N"/>
</dbReference>
<dbReference type="InterPro" id="IPR015590">
    <property type="entry name" value="Aldehyde_DH_dom"/>
</dbReference>
<dbReference type="InterPro" id="IPR012134">
    <property type="entry name" value="Glu-5-SA_DH"/>
</dbReference>
<dbReference type="InterPro" id="IPR000965">
    <property type="entry name" value="GPR_dom"/>
</dbReference>
<dbReference type="PANTHER" id="PTHR11063:SF8">
    <property type="entry name" value="DELTA-1-PYRROLINE-5-CARBOXYLATE SYNTHASE"/>
    <property type="match status" value="1"/>
</dbReference>
<dbReference type="PANTHER" id="PTHR11063">
    <property type="entry name" value="GLUTAMATE SEMIALDEHYDE DEHYDROGENASE"/>
    <property type="match status" value="1"/>
</dbReference>
<dbReference type="Pfam" id="PF00171">
    <property type="entry name" value="Aldedh"/>
    <property type="match status" value="1"/>
</dbReference>
<dbReference type="PIRSF" id="PIRSF000151">
    <property type="entry name" value="GPR"/>
    <property type="match status" value="1"/>
</dbReference>
<dbReference type="SUPFAM" id="SSF53720">
    <property type="entry name" value="ALDH-like"/>
    <property type="match status" value="1"/>
</dbReference>